<accession>Q5R5K8</accession>
<dbReference type="EMBL" id="CR860850">
    <property type="protein sequence ID" value="CAH92958.1"/>
    <property type="molecule type" value="mRNA"/>
</dbReference>
<dbReference type="RefSeq" id="NP_001126744.1">
    <property type="nucleotide sequence ID" value="NM_001133272.1"/>
</dbReference>
<dbReference type="SMR" id="Q5R5K8"/>
<dbReference type="FunCoup" id="Q5R5K8">
    <property type="interactions" value="3161"/>
</dbReference>
<dbReference type="STRING" id="9601.ENSPPYP00000013013"/>
<dbReference type="GeneID" id="100173746"/>
<dbReference type="KEGG" id="pon:100173746"/>
<dbReference type="CTD" id="24144"/>
<dbReference type="eggNOG" id="KOG2184">
    <property type="taxonomic scope" value="Eukaryota"/>
</dbReference>
<dbReference type="InParanoid" id="Q5R5K8"/>
<dbReference type="OrthoDB" id="4822at2759"/>
<dbReference type="Proteomes" id="UP000001595">
    <property type="component" value="Unplaced"/>
</dbReference>
<dbReference type="GO" id="GO:0005737">
    <property type="term" value="C:cytoplasm"/>
    <property type="evidence" value="ECO:0007669"/>
    <property type="project" value="UniProtKB-SubCell"/>
</dbReference>
<dbReference type="GO" id="GO:0005681">
    <property type="term" value="C:spliceosomal complex"/>
    <property type="evidence" value="ECO:0000250"/>
    <property type="project" value="UniProtKB"/>
</dbReference>
<dbReference type="GO" id="GO:0071008">
    <property type="term" value="C:U2-type post-mRNA release spliceosomal complex"/>
    <property type="evidence" value="ECO:0000250"/>
    <property type="project" value="UniProtKB"/>
</dbReference>
<dbReference type="GO" id="GO:0003676">
    <property type="term" value="F:nucleic acid binding"/>
    <property type="evidence" value="ECO:0007669"/>
    <property type="project" value="InterPro"/>
</dbReference>
<dbReference type="GO" id="GO:0031214">
    <property type="term" value="P:biomineral tissue development"/>
    <property type="evidence" value="ECO:0007669"/>
    <property type="project" value="UniProtKB-KW"/>
</dbReference>
<dbReference type="GO" id="GO:0000390">
    <property type="term" value="P:spliceosomal complex disassembly"/>
    <property type="evidence" value="ECO:0000250"/>
    <property type="project" value="UniProtKB"/>
</dbReference>
<dbReference type="InterPro" id="IPR000467">
    <property type="entry name" value="G_patch_dom"/>
</dbReference>
<dbReference type="InterPro" id="IPR022783">
    <property type="entry name" value="GCFC_dom"/>
</dbReference>
<dbReference type="InterPro" id="IPR022159">
    <property type="entry name" value="STIP/TFIP11_N"/>
</dbReference>
<dbReference type="InterPro" id="IPR024933">
    <property type="entry name" value="TFP11"/>
</dbReference>
<dbReference type="InterPro" id="IPR045211">
    <property type="entry name" value="TFP11/STIP/Ntr1"/>
</dbReference>
<dbReference type="PANTHER" id="PTHR23329:SF1">
    <property type="entry name" value="TUFTELIN-INTERACTING PROTEIN 11"/>
    <property type="match status" value="1"/>
</dbReference>
<dbReference type="PANTHER" id="PTHR23329">
    <property type="entry name" value="TUFTELIN-INTERACTING PROTEIN 11-RELATED"/>
    <property type="match status" value="1"/>
</dbReference>
<dbReference type="Pfam" id="PF01585">
    <property type="entry name" value="G-patch"/>
    <property type="match status" value="1"/>
</dbReference>
<dbReference type="Pfam" id="PF07842">
    <property type="entry name" value="GCFC"/>
    <property type="match status" value="1"/>
</dbReference>
<dbReference type="Pfam" id="PF12457">
    <property type="entry name" value="TIP_N"/>
    <property type="match status" value="1"/>
</dbReference>
<dbReference type="PIRSF" id="PIRSF017706">
    <property type="entry name" value="TFIP11"/>
    <property type="match status" value="1"/>
</dbReference>
<dbReference type="SMART" id="SM00443">
    <property type="entry name" value="G_patch"/>
    <property type="match status" value="1"/>
</dbReference>
<dbReference type="PROSITE" id="PS50174">
    <property type="entry name" value="G_PATCH"/>
    <property type="match status" value="1"/>
</dbReference>
<evidence type="ECO:0000250" key="1"/>
<evidence type="ECO:0000250" key="2">
    <source>
        <dbReference type="UniProtKB" id="Q5U2Y6"/>
    </source>
</evidence>
<evidence type="ECO:0000250" key="3">
    <source>
        <dbReference type="UniProtKB" id="Q9UBB9"/>
    </source>
</evidence>
<evidence type="ECO:0000255" key="4">
    <source>
        <dbReference type="PROSITE-ProRule" id="PRU00092"/>
    </source>
</evidence>
<evidence type="ECO:0000256" key="5">
    <source>
        <dbReference type="SAM" id="MobiDB-lite"/>
    </source>
</evidence>
<evidence type="ECO:0000305" key="6"/>
<name>TFP11_PONAB</name>
<organism>
    <name type="scientific">Pongo abelii</name>
    <name type="common">Sumatran orangutan</name>
    <name type="synonym">Pongo pygmaeus abelii</name>
    <dbReference type="NCBI Taxonomy" id="9601"/>
    <lineage>
        <taxon>Eukaryota</taxon>
        <taxon>Metazoa</taxon>
        <taxon>Chordata</taxon>
        <taxon>Craniata</taxon>
        <taxon>Vertebrata</taxon>
        <taxon>Euteleostomi</taxon>
        <taxon>Mammalia</taxon>
        <taxon>Eutheria</taxon>
        <taxon>Euarchontoglires</taxon>
        <taxon>Primates</taxon>
        <taxon>Haplorrhini</taxon>
        <taxon>Catarrhini</taxon>
        <taxon>Hominidae</taxon>
        <taxon>Pongo</taxon>
    </lineage>
</organism>
<gene>
    <name type="primary">TFIP11</name>
    <name type="synonym">STIP</name>
</gene>
<keyword id="KW-0091">Biomineralization</keyword>
<keyword id="KW-0963">Cytoplasm</keyword>
<keyword id="KW-0507">mRNA processing</keyword>
<keyword id="KW-0508">mRNA splicing</keyword>
<keyword id="KW-0539">Nucleus</keyword>
<keyword id="KW-0597">Phosphoprotein</keyword>
<keyword id="KW-1185">Reference proteome</keyword>
<keyword id="KW-0747">Spliceosome</keyword>
<proteinExistence type="evidence at transcript level"/>
<protein>
    <recommendedName>
        <fullName>Tuftelin-interacting protein 11</fullName>
    </recommendedName>
    <alternativeName>
        <fullName>Septin and tuftelin-interacting protein 1</fullName>
        <shortName>STIP-1</shortName>
    </alternativeName>
</protein>
<feature type="chain" id="PRO_0000342276" description="Tuftelin-interacting protein 11">
    <location>
        <begin position="1"/>
        <end position="837"/>
    </location>
</feature>
<feature type="domain" description="G-patch" evidence="4">
    <location>
        <begin position="149"/>
        <end position="195"/>
    </location>
</feature>
<feature type="region of interest" description="Required for interaction with DHX15" evidence="1">
    <location>
        <begin position="1"/>
        <end position="50"/>
    </location>
</feature>
<feature type="region of interest" description="Disordered" evidence="5">
    <location>
        <begin position="1"/>
        <end position="21"/>
    </location>
</feature>
<feature type="region of interest" description="Disordered" evidence="5">
    <location>
        <begin position="53"/>
        <end position="72"/>
    </location>
</feature>
<feature type="region of interest" description="Disordered" evidence="5">
    <location>
        <begin position="85"/>
        <end position="133"/>
    </location>
</feature>
<feature type="region of interest" description="Disordered" evidence="5">
    <location>
        <begin position="179"/>
        <end position="236"/>
    </location>
</feature>
<feature type="region of interest" description="Required for nuclear speckle localization" evidence="1">
    <location>
        <begin position="710"/>
        <end position="734"/>
    </location>
</feature>
<feature type="short sequence motif" description="Nuclear localization signal" evidence="1">
    <location>
        <begin position="700"/>
        <end position="705"/>
    </location>
</feature>
<feature type="compositionally biased region" description="Basic and acidic residues" evidence="5">
    <location>
        <begin position="1"/>
        <end position="13"/>
    </location>
</feature>
<feature type="compositionally biased region" description="Basic and acidic residues" evidence="5">
    <location>
        <begin position="53"/>
        <end position="64"/>
    </location>
</feature>
<feature type="compositionally biased region" description="Acidic residues" evidence="5">
    <location>
        <begin position="91"/>
        <end position="102"/>
    </location>
</feature>
<feature type="compositionally biased region" description="Basic and acidic residues" evidence="5">
    <location>
        <begin position="103"/>
        <end position="116"/>
    </location>
</feature>
<feature type="compositionally biased region" description="Basic and acidic residues" evidence="5">
    <location>
        <begin position="217"/>
        <end position="231"/>
    </location>
</feature>
<feature type="modified residue" description="Phosphoserine" evidence="2">
    <location>
        <position position="2"/>
    </location>
</feature>
<feature type="modified residue" description="Phosphoserine" evidence="3">
    <location>
        <position position="59"/>
    </location>
</feature>
<feature type="modified residue" description="Phosphoserine" evidence="3">
    <location>
        <position position="98"/>
    </location>
</feature>
<feature type="modified residue" description="Phosphoserine" evidence="3">
    <location>
        <position position="144"/>
    </location>
</feature>
<feature type="modified residue" description="Phosphoserine" evidence="3">
    <location>
        <position position="210"/>
    </location>
</feature>
<sequence length="837" mass="96869">MSLSHLYRDGEGRIDDDDDERENFEITDWDLQNEFNPNRQRHWQTKEEATYGVWAERDSDDERPSFGGKRARDYSAPVNFISAGLKKGAAEEAELEDSDDEEKPVKQDDFPKDFGPRKLKTGGNFKPSQKGFAGGTKSFMDFGSWERHTKGIGQKLLQKMGYVPGRGLGKNAQGIINPIEAKQRKGKGAVGAYGSERTTQSMQDFPVVDSEEEAEEEFQKELSQWRKDPSGSKKKPKYSYKTVEELKAKGRISKKLTAPQKELSQVKVIDMTGREQKVYYSYSQISHKHNVPDDGLPLQSQQLPQSGKEAKAPGFALSELEHNLQLLIDLTEQEIIQNDRQLQYERDMVVNLFHELEKMTEVLDHEERVIFNLSKVLEMVEECERRMQPNCSNPLTLDECARIFETLQDKYYEEYRMSDRVDLAVAIVYPLMKEYFKEWDPLKDCTYGTEIISKWKSLLENDQLLSHGGQDLSADAFHRLIWEVWMPFVRNIVTQWQPRNCDPMVDFLDSWVHIIPVWILDNILDQLIFPKLQKEVENWNPLTDTVPIHSWIHPWLPLMQARLEPLYSPIRSKLSSALQKWHPSDSSAKLILQPWKDVFTPGSWEAFMVKNIVPKLGMCLGELVINPHQQHMDAFYWVIDWEGMISVSSLVGLLEKHFFPKWLQVLCSWLSNSPNYEEITKWYLGWKSMFSDQVLAHPSVKDKFNEALDIMNRAVSSNVGAYMQPGARENIAYLTHTERRKDFQYEAMQERREAENMAQRGIGVAASSVPMNFKDLIETKAEEHNIVFMPVIGKRHEGKQLYTFGRIVIYIDRGVVFVQGEKTWVPTSLQSLIDMAK</sequence>
<reference key="1">
    <citation type="submission" date="2004-11" db="EMBL/GenBank/DDBJ databases">
        <authorList>
            <consortium name="The German cDNA consortium"/>
        </authorList>
    </citation>
    <scope>NUCLEOTIDE SEQUENCE [LARGE SCALE MRNA]</scope>
    <source>
        <tissue>Kidney</tissue>
    </source>
</reference>
<comment type="function">
    <text evidence="1">Involved in pre-mRNA splicing, specifically in spliceosome disassembly during late-stage splicing events. Intron turnover seems to proceed through reactions in two lariat-intron associated complexes termed Intron Large (IL) and Intron Small (IS). In cooperation with DHX15 seems to mediate the transition of the U2, U5 and U6 snRNP-containing IL complex to the snRNP-free IS complex leading to efficient debranching and turnover of excised introns. May play a role in the differentiation of ameloblasts and odontoblasts or in the forming of the enamel extracellular matrix (By similarity).</text>
</comment>
<comment type="subunit">
    <text evidence="1">Identified in the spliceosome C complex. Found in the Intron Large (IL) complex, a post-mRNA release spliceosomal complex containing the excised intron, U2, U5 and U6 snRNPs, and splicing factors. Interacts with TUFT1. Interacts with DHX15; indicative for a recruitment of DHX15 to the IL complex. Interacts with GCFC2 (By similarity).</text>
</comment>
<comment type="subcellular location">
    <subcellularLocation>
        <location evidence="1">Cytoplasm</location>
    </subcellularLocation>
    <subcellularLocation>
        <location evidence="1">Nucleus</location>
    </subcellularLocation>
    <text evidence="1">In the nucleus localizes to unique speckle domains in close proximity to nuclear speckles and not identical to paraspeckles.</text>
</comment>
<comment type="similarity">
    <text evidence="6">Belongs to the TFP11/STIP family.</text>
</comment>